<protein>
    <recommendedName>
        <fullName evidence="1">3-demethoxyubiquinol 3-hydroxylase</fullName>
        <shortName evidence="1">DMQ hydroxylase</shortName>
        <ecNumber evidence="1">1.14.99.60</ecNumber>
    </recommendedName>
    <alternativeName>
        <fullName evidence="1">2-nonaprenyl-3-methyl-6-methoxy-1,4-benzoquinol hydroxylase</fullName>
    </alternativeName>
</protein>
<proteinExistence type="inferred from homology"/>
<gene>
    <name evidence="1" type="primary">coq7</name>
    <name type="ordered locus">CV_3371</name>
</gene>
<reference key="1">
    <citation type="journal article" date="2003" name="Proc. Natl. Acad. Sci. U.S.A.">
        <title>The complete genome sequence of Chromobacterium violaceum reveals remarkable and exploitable bacterial adaptability.</title>
        <authorList>
            <person name="Vasconcelos A.T.R."/>
            <person name="de Almeida D.F."/>
            <person name="Hungria M."/>
            <person name="Guimaraes C.T."/>
            <person name="Antonio R.V."/>
            <person name="Almeida F.C."/>
            <person name="de Almeida L.G.P."/>
            <person name="de Almeida R."/>
            <person name="Alves-Gomes J.A."/>
            <person name="Andrade E.M."/>
            <person name="Araripe J."/>
            <person name="de Araujo M.F.F."/>
            <person name="Astolfi-Filho S."/>
            <person name="Azevedo V."/>
            <person name="Baptista A.J."/>
            <person name="Bataus L.A.M."/>
            <person name="Batista J.S."/>
            <person name="Belo A."/>
            <person name="van den Berg C."/>
            <person name="Bogo M."/>
            <person name="Bonatto S."/>
            <person name="Bordignon J."/>
            <person name="Brigido M.M."/>
            <person name="Brito C.A."/>
            <person name="Brocchi M."/>
            <person name="Burity H.A."/>
            <person name="Camargo A.A."/>
            <person name="Cardoso D.D.P."/>
            <person name="Carneiro N.P."/>
            <person name="Carraro D.M."/>
            <person name="Carvalho C.M.B."/>
            <person name="Cascardo J.C.M."/>
            <person name="Cavada B.S."/>
            <person name="Chueire L.M.O."/>
            <person name="Creczynski-Pasa T.B."/>
            <person name="Cunha-Junior N.C."/>
            <person name="Fagundes N."/>
            <person name="Falcao C.L."/>
            <person name="Fantinatti F."/>
            <person name="Farias I.P."/>
            <person name="Felipe M.S.S."/>
            <person name="Ferrari L.P."/>
            <person name="Ferro J.A."/>
            <person name="Ferro M.I.T."/>
            <person name="Franco G.R."/>
            <person name="Freitas N.S.A."/>
            <person name="Furlan L.R."/>
            <person name="Gazzinelli R.T."/>
            <person name="Gomes E.A."/>
            <person name="Goncalves P.R."/>
            <person name="Grangeiro T.B."/>
            <person name="Grattapaglia D."/>
            <person name="Grisard E.C."/>
            <person name="Hanna E.S."/>
            <person name="Jardim S.N."/>
            <person name="Laurino J."/>
            <person name="Leoi L.C.T."/>
            <person name="Lima L.F.A."/>
            <person name="Loureiro M.F."/>
            <person name="Lyra M.C.C.P."/>
            <person name="Madeira H.M.F."/>
            <person name="Manfio G.P."/>
            <person name="Maranhao A.Q."/>
            <person name="Martins W.S."/>
            <person name="di Mauro S.M.Z."/>
            <person name="de Medeiros S.R.B."/>
            <person name="Meissner R.V."/>
            <person name="Moreira M.A.M."/>
            <person name="Nascimento F.F."/>
            <person name="Nicolas M.F."/>
            <person name="Oliveira J.G."/>
            <person name="Oliveira S.C."/>
            <person name="Paixao R.F.C."/>
            <person name="Parente J.A."/>
            <person name="Pedrosa F.O."/>
            <person name="Pena S.D.J."/>
            <person name="Pereira J.O."/>
            <person name="Pereira M."/>
            <person name="Pinto L.S.R.C."/>
            <person name="Pinto L.S."/>
            <person name="Porto J.I.R."/>
            <person name="Potrich D.P."/>
            <person name="Ramalho-Neto C.E."/>
            <person name="Reis A.M.M."/>
            <person name="Rigo L.U."/>
            <person name="Rondinelli E."/>
            <person name="Santos E.B.P."/>
            <person name="Santos F.R."/>
            <person name="Schneider M.P.C."/>
            <person name="Seuanez H.N."/>
            <person name="Silva A.M.R."/>
            <person name="da Silva A.L.C."/>
            <person name="Silva D.W."/>
            <person name="Silva R."/>
            <person name="Simoes I.C."/>
            <person name="Simon D."/>
            <person name="Soares C.M.A."/>
            <person name="Soares R.B.A."/>
            <person name="Souza E.M."/>
            <person name="Souza K.R.L."/>
            <person name="Souza R.C."/>
            <person name="Steffens M.B.R."/>
            <person name="Steindel M."/>
            <person name="Teixeira S.R."/>
            <person name="Urmenyi T."/>
            <person name="Vettore A."/>
            <person name="Wassem R."/>
            <person name="Zaha A."/>
            <person name="Simpson A.J.G."/>
        </authorList>
    </citation>
    <scope>NUCLEOTIDE SEQUENCE [LARGE SCALE GENOMIC DNA]</scope>
    <source>
        <strain>ATCC 12472 / DSM 30191 / JCM 1249 / CCUG 213 / NBRC 12614 / NCIMB 9131 / NCTC 9757 / MK</strain>
    </source>
</reference>
<accession>Q7NSP9</accession>
<keyword id="KW-1003">Cell membrane</keyword>
<keyword id="KW-0408">Iron</keyword>
<keyword id="KW-0472">Membrane</keyword>
<keyword id="KW-0479">Metal-binding</keyword>
<keyword id="KW-0503">Monooxygenase</keyword>
<keyword id="KW-0560">Oxidoreductase</keyword>
<keyword id="KW-1185">Reference proteome</keyword>
<keyword id="KW-0831">Ubiquinone biosynthesis</keyword>
<organism>
    <name type="scientific">Chromobacterium violaceum (strain ATCC 12472 / DSM 30191 / JCM 1249 / CCUG 213 / NBRC 12614 / NCIMB 9131 / NCTC 9757 / MK)</name>
    <dbReference type="NCBI Taxonomy" id="243365"/>
    <lineage>
        <taxon>Bacteria</taxon>
        <taxon>Pseudomonadati</taxon>
        <taxon>Pseudomonadota</taxon>
        <taxon>Betaproteobacteria</taxon>
        <taxon>Neisseriales</taxon>
        <taxon>Chromobacteriaceae</taxon>
        <taxon>Chromobacterium</taxon>
    </lineage>
</organism>
<dbReference type="EC" id="1.14.99.60" evidence="1"/>
<dbReference type="EMBL" id="AE016825">
    <property type="protein sequence ID" value="AAQ61035.1"/>
    <property type="molecule type" value="Genomic_DNA"/>
</dbReference>
<dbReference type="RefSeq" id="WP_011136918.1">
    <property type="nucleotide sequence ID" value="NC_005085.1"/>
</dbReference>
<dbReference type="SMR" id="Q7NSP9"/>
<dbReference type="STRING" id="243365.CV_3371"/>
<dbReference type="KEGG" id="cvi:CV_3371"/>
<dbReference type="eggNOG" id="COG2941">
    <property type="taxonomic scope" value="Bacteria"/>
</dbReference>
<dbReference type="HOGENOM" id="CLU_088601_0_0_4"/>
<dbReference type="OrthoDB" id="5192789at2"/>
<dbReference type="UniPathway" id="UPA00232"/>
<dbReference type="Proteomes" id="UP000001424">
    <property type="component" value="Chromosome"/>
</dbReference>
<dbReference type="GO" id="GO:0005886">
    <property type="term" value="C:plasma membrane"/>
    <property type="evidence" value="ECO:0007669"/>
    <property type="project" value="UniProtKB-SubCell"/>
</dbReference>
<dbReference type="GO" id="GO:0008682">
    <property type="term" value="F:3-demethoxyubiquinol 3-hydroxylase activity"/>
    <property type="evidence" value="ECO:0007669"/>
    <property type="project" value="UniProtKB-EC"/>
</dbReference>
<dbReference type="GO" id="GO:0046872">
    <property type="term" value="F:metal ion binding"/>
    <property type="evidence" value="ECO:0007669"/>
    <property type="project" value="UniProtKB-KW"/>
</dbReference>
<dbReference type="GO" id="GO:0006744">
    <property type="term" value="P:ubiquinone biosynthetic process"/>
    <property type="evidence" value="ECO:0007669"/>
    <property type="project" value="UniProtKB-UniRule"/>
</dbReference>
<dbReference type="CDD" id="cd01042">
    <property type="entry name" value="DMQH"/>
    <property type="match status" value="1"/>
</dbReference>
<dbReference type="Gene3D" id="1.20.1260.10">
    <property type="match status" value="1"/>
</dbReference>
<dbReference type="HAMAP" id="MF_01658">
    <property type="entry name" value="COQ7"/>
    <property type="match status" value="1"/>
</dbReference>
<dbReference type="InterPro" id="IPR047809">
    <property type="entry name" value="COQ7_proteobact"/>
</dbReference>
<dbReference type="InterPro" id="IPR012347">
    <property type="entry name" value="Ferritin-like"/>
</dbReference>
<dbReference type="InterPro" id="IPR009078">
    <property type="entry name" value="Ferritin-like_SF"/>
</dbReference>
<dbReference type="InterPro" id="IPR011566">
    <property type="entry name" value="Ubq_synth_Coq7"/>
</dbReference>
<dbReference type="NCBIfam" id="NF033656">
    <property type="entry name" value="DMQ_monoox_COQ7"/>
    <property type="match status" value="1"/>
</dbReference>
<dbReference type="PANTHER" id="PTHR11237:SF4">
    <property type="entry name" value="5-DEMETHOXYUBIQUINONE HYDROXYLASE, MITOCHONDRIAL"/>
    <property type="match status" value="1"/>
</dbReference>
<dbReference type="PANTHER" id="PTHR11237">
    <property type="entry name" value="COENZYME Q10 BIOSYNTHESIS PROTEIN 7"/>
    <property type="match status" value="1"/>
</dbReference>
<dbReference type="Pfam" id="PF03232">
    <property type="entry name" value="COQ7"/>
    <property type="match status" value="1"/>
</dbReference>
<dbReference type="SUPFAM" id="SSF47240">
    <property type="entry name" value="Ferritin-like"/>
    <property type="match status" value="1"/>
</dbReference>
<comment type="function">
    <text evidence="1">Catalyzes the hydroxylation of 2-nonaprenyl-3-methyl-6-methoxy-1,4-benzoquinol during ubiquinone biosynthesis.</text>
</comment>
<comment type="catalytic activity">
    <reaction evidence="1">
        <text>a 5-methoxy-2-methyl-3-(all-trans-polyprenyl)benzene-1,4-diol + AH2 + O2 = a 3-demethylubiquinol + A + H2O</text>
        <dbReference type="Rhea" id="RHEA:50908"/>
        <dbReference type="Rhea" id="RHEA-COMP:10859"/>
        <dbReference type="Rhea" id="RHEA-COMP:10914"/>
        <dbReference type="ChEBI" id="CHEBI:13193"/>
        <dbReference type="ChEBI" id="CHEBI:15377"/>
        <dbReference type="ChEBI" id="CHEBI:15379"/>
        <dbReference type="ChEBI" id="CHEBI:17499"/>
        <dbReference type="ChEBI" id="CHEBI:84167"/>
        <dbReference type="ChEBI" id="CHEBI:84422"/>
        <dbReference type="EC" id="1.14.99.60"/>
    </reaction>
</comment>
<comment type="cofactor">
    <cofactor evidence="1">
        <name>Fe cation</name>
        <dbReference type="ChEBI" id="CHEBI:24875"/>
    </cofactor>
    <text evidence="1">Binds 2 iron ions per subunit.</text>
</comment>
<comment type="pathway">
    <text evidence="1">Cofactor biosynthesis; ubiquinone biosynthesis.</text>
</comment>
<comment type="subcellular location">
    <subcellularLocation>
        <location evidence="1">Cell membrane</location>
        <topology evidence="1">Peripheral membrane protein</topology>
    </subcellularLocation>
</comment>
<comment type="similarity">
    <text evidence="1">Belongs to the COQ7 family.</text>
</comment>
<evidence type="ECO:0000255" key="1">
    <source>
        <dbReference type="HAMAP-Rule" id="MF_01658"/>
    </source>
</evidence>
<name>COQ7_CHRVO</name>
<sequence>MLDKLITELDKGLRTLCAPAHSGRAHPDQDIAEADLSAAEKKHALGLMRVNHCGEVCAQALYQGQALTARDASAREALRQAAQEEVEHLAWTERRIRELGGRPSLLNPLWYTGSLALGVAAGVLGDKWNLGFLQETERQVGAHLDSHLSALPPDDARSRAIVRQMRDDELQHAEMAHELGAAELPAPVKAAMKLSAKVMTGSSYRV</sequence>
<feature type="chain" id="PRO_0000338678" description="3-demethoxyubiquinol 3-hydroxylase">
    <location>
        <begin position="1"/>
        <end position="206"/>
    </location>
</feature>
<feature type="binding site" evidence="1">
    <location>
        <position position="55"/>
    </location>
    <ligand>
        <name>Fe cation</name>
        <dbReference type="ChEBI" id="CHEBI:24875"/>
        <label>1</label>
    </ligand>
</feature>
<feature type="binding site" evidence="1">
    <location>
        <position position="85"/>
    </location>
    <ligand>
        <name>Fe cation</name>
        <dbReference type="ChEBI" id="CHEBI:24875"/>
        <label>1</label>
    </ligand>
</feature>
<feature type="binding site" evidence="1">
    <location>
        <position position="85"/>
    </location>
    <ligand>
        <name>Fe cation</name>
        <dbReference type="ChEBI" id="CHEBI:24875"/>
        <label>2</label>
    </ligand>
</feature>
<feature type="binding site" evidence="1">
    <location>
        <position position="88"/>
    </location>
    <ligand>
        <name>Fe cation</name>
        <dbReference type="ChEBI" id="CHEBI:24875"/>
        <label>1</label>
    </ligand>
</feature>
<feature type="binding site" evidence="1">
    <location>
        <position position="137"/>
    </location>
    <ligand>
        <name>Fe cation</name>
        <dbReference type="ChEBI" id="CHEBI:24875"/>
        <label>2</label>
    </ligand>
</feature>
<feature type="binding site" evidence="1">
    <location>
        <position position="169"/>
    </location>
    <ligand>
        <name>Fe cation</name>
        <dbReference type="ChEBI" id="CHEBI:24875"/>
        <label>1</label>
    </ligand>
</feature>
<feature type="binding site" evidence="1">
    <location>
        <position position="169"/>
    </location>
    <ligand>
        <name>Fe cation</name>
        <dbReference type="ChEBI" id="CHEBI:24875"/>
        <label>2</label>
    </ligand>
</feature>
<feature type="binding site" evidence="1">
    <location>
        <position position="172"/>
    </location>
    <ligand>
        <name>Fe cation</name>
        <dbReference type="ChEBI" id="CHEBI:24875"/>
        <label>2</label>
    </ligand>
</feature>